<sequence>MAIQHRDPRGGGGSRDARTNRRIKAREVRVIGAEGEQLGVLPIDQALARAQELGMDLVEVSPMAKPPVCKIMDYGRFKYLEKKKQNEAKKKQVVVQLKEVKLRPRTEEHDYDTKIKKVRAFLGEANKARITVMFRGREMSHRELGQKVLQRVIEDLRDVAVIESAPRMEGRQMFMILAPNPKMLQSQRDKAKAAAAAAPAAAPAAGAPAPAPAPAAPAPAPTAADPAAQR</sequence>
<organism>
    <name type="scientific">Anaeromyxobacter dehalogenans (strain 2CP-1 / ATCC BAA-258)</name>
    <dbReference type="NCBI Taxonomy" id="455488"/>
    <lineage>
        <taxon>Bacteria</taxon>
        <taxon>Pseudomonadati</taxon>
        <taxon>Myxococcota</taxon>
        <taxon>Myxococcia</taxon>
        <taxon>Myxococcales</taxon>
        <taxon>Cystobacterineae</taxon>
        <taxon>Anaeromyxobacteraceae</taxon>
        <taxon>Anaeromyxobacter</taxon>
    </lineage>
</organism>
<reference key="1">
    <citation type="submission" date="2009-01" db="EMBL/GenBank/DDBJ databases">
        <title>Complete sequence of Anaeromyxobacter dehalogenans 2CP-1.</title>
        <authorList>
            <person name="Lucas S."/>
            <person name="Copeland A."/>
            <person name="Lapidus A."/>
            <person name="Glavina del Rio T."/>
            <person name="Dalin E."/>
            <person name="Tice H."/>
            <person name="Bruce D."/>
            <person name="Goodwin L."/>
            <person name="Pitluck S."/>
            <person name="Saunders E."/>
            <person name="Brettin T."/>
            <person name="Detter J.C."/>
            <person name="Han C."/>
            <person name="Larimer F."/>
            <person name="Land M."/>
            <person name="Hauser L."/>
            <person name="Kyrpides N."/>
            <person name="Ovchinnikova G."/>
            <person name="Beliaev A.S."/>
            <person name="Richardson P."/>
        </authorList>
    </citation>
    <scope>NUCLEOTIDE SEQUENCE [LARGE SCALE GENOMIC DNA]</scope>
    <source>
        <strain>2CP-1 / ATCC BAA-258</strain>
    </source>
</reference>
<keyword id="KW-0963">Cytoplasm</keyword>
<keyword id="KW-0396">Initiation factor</keyword>
<keyword id="KW-0648">Protein biosynthesis</keyword>
<dbReference type="EMBL" id="CP001359">
    <property type="protein sequence ID" value="ACL65329.1"/>
    <property type="molecule type" value="Genomic_DNA"/>
</dbReference>
<dbReference type="RefSeq" id="WP_012633228.1">
    <property type="nucleotide sequence ID" value="NC_011891.1"/>
</dbReference>
<dbReference type="SMR" id="B8J830"/>
<dbReference type="KEGG" id="acp:A2cp1_1988"/>
<dbReference type="HOGENOM" id="CLU_054919_0_3_7"/>
<dbReference type="Proteomes" id="UP000007089">
    <property type="component" value="Chromosome"/>
</dbReference>
<dbReference type="GO" id="GO:0005829">
    <property type="term" value="C:cytosol"/>
    <property type="evidence" value="ECO:0007669"/>
    <property type="project" value="TreeGrafter"/>
</dbReference>
<dbReference type="GO" id="GO:0016020">
    <property type="term" value="C:membrane"/>
    <property type="evidence" value="ECO:0007669"/>
    <property type="project" value="TreeGrafter"/>
</dbReference>
<dbReference type="GO" id="GO:0043022">
    <property type="term" value="F:ribosome binding"/>
    <property type="evidence" value="ECO:0007669"/>
    <property type="project" value="TreeGrafter"/>
</dbReference>
<dbReference type="GO" id="GO:0003743">
    <property type="term" value="F:translation initiation factor activity"/>
    <property type="evidence" value="ECO:0007669"/>
    <property type="project" value="UniProtKB-UniRule"/>
</dbReference>
<dbReference type="GO" id="GO:0032790">
    <property type="term" value="P:ribosome disassembly"/>
    <property type="evidence" value="ECO:0007669"/>
    <property type="project" value="TreeGrafter"/>
</dbReference>
<dbReference type="FunFam" id="3.10.20.80:FF:000001">
    <property type="entry name" value="Translation initiation factor IF-3"/>
    <property type="match status" value="1"/>
</dbReference>
<dbReference type="FunFam" id="3.30.110.10:FF:000001">
    <property type="entry name" value="Translation initiation factor IF-3"/>
    <property type="match status" value="1"/>
</dbReference>
<dbReference type="Gene3D" id="3.30.110.10">
    <property type="entry name" value="Translation initiation factor 3 (IF-3), C-terminal domain"/>
    <property type="match status" value="1"/>
</dbReference>
<dbReference type="Gene3D" id="3.10.20.80">
    <property type="entry name" value="Translation initiation factor 3 (IF-3), N-terminal domain"/>
    <property type="match status" value="1"/>
</dbReference>
<dbReference type="HAMAP" id="MF_00080">
    <property type="entry name" value="IF_3"/>
    <property type="match status" value="1"/>
</dbReference>
<dbReference type="InterPro" id="IPR036788">
    <property type="entry name" value="T_IF-3_C_sf"/>
</dbReference>
<dbReference type="InterPro" id="IPR036787">
    <property type="entry name" value="T_IF-3_N_sf"/>
</dbReference>
<dbReference type="InterPro" id="IPR001288">
    <property type="entry name" value="Translation_initiation_fac_3"/>
</dbReference>
<dbReference type="InterPro" id="IPR019815">
    <property type="entry name" value="Translation_initiation_fac_3_C"/>
</dbReference>
<dbReference type="InterPro" id="IPR019814">
    <property type="entry name" value="Translation_initiation_fac_3_N"/>
</dbReference>
<dbReference type="NCBIfam" id="TIGR00168">
    <property type="entry name" value="infC"/>
    <property type="match status" value="1"/>
</dbReference>
<dbReference type="PANTHER" id="PTHR10938">
    <property type="entry name" value="TRANSLATION INITIATION FACTOR IF-3"/>
    <property type="match status" value="1"/>
</dbReference>
<dbReference type="PANTHER" id="PTHR10938:SF0">
    <property type="entry name" value="TRANSLATION INITIATION FACTOR IF-3, MITOCHONDRIAL"/>
    <property type="match status" value="1"/>
</dbReference>
<dbReference type="Pfam" id="PF00707">
    <property type="entry name" value="IF3_C"/>
    <property type="match status" value="1"/>
</dbReference>
<dbReference type="Pfam" id="PF05198">
    <property type="entry name" value="IF3_N"/>
    <property type="match status" value="1"/>
</dbReference>
<dbReference type="SUPFAM" id="SSF55200">
    <property type="entry name" value="Translation initiation factor IF3, C-terminal domain"/>
    <property type="match status" value="1"/>
</dbReference>
<dbReference type="SUPFAM" id="SSF54364">
    <property type="entry name" value="Translation initiation factor IF3, N-terminal domain"/>
    <property type="match status" value="1"/>
</dbReference>
<gene>
    <name evidence="1" type="primary">infC</name>
    <name type="ordered locus">A2cp1_1988</name>
</gene>
<protein>
    <recommendedName>
        <fullName evidence="1">Translation initiation factor IF-3</fullName>
    </recommendedName>
</protein>
<feature type="chain" id="PRO_1000118260" description="Translation initiation factor IF-3">
    <location>
        <begin position="1"/>
        <end position="230"/>
    </location>
</feature>
<feature type="region of interest" description="Disordered" evidence="2">
    <location>
        <begin position="1"/>
        <end position="21"/>
    </location>
</feature>
<feature type="region of interest" description="Disordered" evidence="2">
    <location>
        <begin position="184"/>
        <end position="230"/>
    </location>
</feature>
<feature type="compositionally biased region" description="Low complexity" evidence="2">
    <location>
        <begin position="193"/>
        <end position="208"/>
    </location>
</feature>
<feature type="compositionally biased region" description="Pro residues" evidence="2">
    <location>
        <begin position="209"/>
        <end position="220"/>
    </location>
</feature>
<feature type="compositionally biased region" description="Low complexity" evidence="2">
    <location>
        <begin position="221"/>
        <end position="230"/>
    </location>
</feature>
<proteinExistence type="inferred from homology"/>
<accession>B8J830</accession>
<name>IF3_ANAD2</name>
<comment type="function">
    <text evidence="1">IF-3 binds to the 30S ribosomal subunit and shifts the equilibrium between 70S ribosomes and their 50S and 30S subunits in favor of the free subunits, thus enhancing the availability of 30S subunits on which protein synthesis initiation begins.</text>
</comment>
<comment type="subunit">
    <text evidence="1">Monomer.</text>
</comment>
<comment type="subcellular location">
    <subcellularLocation>
        <location evidence="1">Cytoplasm</location>
    </subcellularLocation>
</comment>
<comment type="similarity">
    <text evidence="1">Belongs to the IF-3 family.</text>
</comment>
<evidence type="ECO:0000255" key="1">
    <source>
        <dbReference type="HAMAP-Rule" id="MF_00080"/>
    </source>
</evidence>
<evidence type="ECO:0000256" key="2">
    <source>
        <dbReference type="SAM" id="MobiDB-lite"/>
    </source>
</evidence>